<accession>B8D929</accession>
<evidence type="ECO:0000255" key="1">
    <source>
        <dbReference type="HAMAP-Rule" id="MF_00050"/>
    </source>
</evidence>
<dbReference type="EMBL" id="CP001161">
    <property type="protein sequence ID" value="ACL30600.1"/>
    <property type="molecule type" value="Genomic_DNA"/>
</dbReference>
<dbReference type="RefSeq" id="WP_009874188.1">
    <property type="nucleotide sequence ID" value="NC_011833.1"/>
</dbReference>
<dbReference type="SMR" id="B8D929"/>
<dbReference type="KEGG" id="bap:BUAP5A_227"/>
<dbReference type="HOGENOM" id="CLU_047155_0_2_6"/>
<dbReference type="OrthoDB" id="9808348at2"/>
<dbReference type="Proteomes" id="UP000006904">
    <property type="component" value="Chromosome"/>
</dbReference>
<dbReference type="GO" id="GO:0005737">
    <property type="term" value="C:cytoplasm"/>
    <property type="evidence" value="ECO:0007669"/>
    <property type="project" value="UniProtKB-SubCell"/>
</dbReference>
<dbReference type="GO" id="GO:0003746">
    <property type="term" value="F:translation elongation factor activity"/>
    <property type="evidence" value="ECO:0007669"/>
    <property type="project" value="UniProtKB-UniRule"/>
</dbReference>
<dbReference type="CDD" id="cd14275">
    <property type="entry name" value="UBA_EF-Ts"/>
    <property type="match status" value="1"/>
</dbReference>
<dbReference type="FunFam" id="1.10.8.10:FF:000001">
    <property type="entry name" value="Elongation factor Ts"/>
    <property type="match status" value="1"/>
</dbReference>
<dbReference type="Gene3D" id="1.10.286.20">
    <property type="match status" value="1"/>
</dbReference>
<dbReference type="Gene3D" id="1.10.8.10">
    <property type="entry name" value="DNA helicase RuvA subunit, C-terminal domain"/>
    <property type="match status" value="1"/>
</dbReference>
<dbReference type="Gene3D" id="3.30.479.20">
    <property type="entry name" value="Elongation factor Ts, dimerisation domain"/>
    <property type="match status" value="2"/>
</dbReference>
<dbReference type="HAMAP" id="MF_00050">
    <property type="entry name" value="EF_Ts"/>
    <property type="match status" value="1"/>
</dbReference>
<dbReference type="InterPro" id="IPR036402">
    <property type="entry name" value="EF-Ts_dimer_sf"/>
</dbReference>
<dbReference type="InterPro" id="IPR001816">
    <property type="entry name" value="Transl_elong_EFTs/EF1B"/>
</dbReference>
<dbReference type="InterPro" id="IPR014039">
    <property type="entry name" value="Transl_elong_EFTs/EF1B_dimer"/>
</dbReference>
<dbReference type="InterPro" id="IPR018101">
    <property type="entry name" value="Transl_elong_Ts_CS"/>
</dbReference>
<dbReference type="InterPro" id="IPR009060">
    <property type="entry name" value="UBA-like_sf"/>
</dbReference>
<dbReference type="NCBIfam" id="TIGR00116">
    <property type="entry name" value="tsf"/>
    <property type="match status" value="1"/>
</dbReference>
<dbReference type="PANTHER" id="PTHR11741">
    <property type="entry name" value="ELONGATION FACTOR TS"/>
    <property type="match status" value="1"/>
</dbReference>
<dbReference type="PANTHER" id="PTHR11741:SF0">
    <property type="entry name" value="ELONGATION FACTOR TS, MITOCHONDRIAL"/>
    <property type="match status" value="1"/>
</dbReference>
<dbReference type="Pfam" id="PF00889">
    <property type="entry name" value="EF_TS"/>
    <property type="match status" value="1"/>
</dbReference>
<dbReference type="SUPFAM" id="SSF54713">
    <property type="entry name" value="Elongation factor Ts (EF-Ts), dimerisation domain"/>
    <property type="match status" value="1"/>
</dbReference>
<dbReference type="SUPFAM" id="SSF46934">
    <property type="entry name" value="UBA-like"/>
    <property type="match status" value="1"/>
</dbReference>
<dbReference type="PROSITE" id="PS01126">
    <property type="entry name" value="EF_TS_1"/>
    <property type="match status" value="1"/>
</dbReference>
<dbReference type="PROSITE" id="PS01127">
    <property type="entry name" value="EF_TS_2"/>
    <property type="match status" value="1"/>
</dbReference>
<protein>
    <recommendedName>
        <fullName evidence="1">Elongation factor Ts</fullName>
        <shortName evidence="1">EF-Ts</shortName>
    </recommendedName>
</protein>
<proteinExistence type="inferred from homology"/>
<organism>
    <name type="scientific">Buchnera aphidicola subsp. Acyrthosiphon pisum (strain 5A)</name>
    <dbReference type="NCBI Taxonomy" id="563178"/>
    <lineage>
        <taxon>Bacteria</taxon>
        <taxon>Pseudomonadati</taxon>
        <taxon>Pseudomonadota</taxon>
        <taxon>Gammaproteobacteria</taxon>
        <taxon>Enterobacterales</taxon>
        <taxon>Erwiniaceae</taxon>
        <taxon>Buchnera</taxon>
    </lineage>
</organism>
<name>EFTS_BUCA5</name>
<reference key="1">
    <citation type="journal article" date="2009" name="Science">
        <title>The dynamics and time scale of ongoing genomic erosion in symbiotic bacteria.</title>
        <authorList>
            <person name="Moran N.A."/>
            <person name="McLaughlin H.J."/>
            <person name="Sorek R."/>
        </authorList>
    </citation>
    <scope>NUCLEOTIDE SEQUENCE [LARGE SCALE GENOMIC DNA]</scope>
    <source>
        <strain>5A</strain>
    </source>
</reference>
<comment type="function">
    <text evidence="1">Associates with the EF-Tu.GDP complex and induces the exchange of GDP to GTP. It remains bound to the aminoacyl-tRNA.EF-Tu.GTP complex up to the GTP hydrolysis stage on the ribosome.</text>
</comment>
<comment type="subcellular location">
    <subcellularLocation>
        <location evidence="1">Cytoplasm</location>
    </subcellularLocation>
</comment>
<comment type="similarity">
    <text evidence="1">Belongs to the EF-Ts family.</text>
</comment>
<gene>
    <name evidence="1" type="primary">tsf</name>
    <name type="ordered locus">BUAP5A_227</name>
</gene>
<feature type="chain" id="PRO_1000189866" description="Elongation factor Ts">
    <location>
        <begin position="1"/>
        <end position="268"/>
    </location>
</feature>
<feature type="region of interest" description="Involved in Mg(2+) ion dislocation from EF-Tu" evidence="1">
    <location>
        <begin position="81"/>
        <end position="84"/>
    </location>
</feature>
<sequence length="268" mass="30266">MKTNVDTGLIKELRSRTGAGFLACKRALLEENGDIESAIDNLRKSGKLTAEKKINNITNQGAIFSKIKNNIGVMLELNCETDFVSKDNLFICLGEDILVEALEKRIKDINQLKVIFESRRTELVSKVGENINIRRFHLIEGENIFSYLHGVRIGVLVSSSSLNKTILKNIAMHIAASKPEYLHPKNVSSEVFQREYQIQLELAKNLNKPSNLLKKIIDGRMEKFVNNISLTSQSFIMNPIKTVGDILNENHAHIESFIRFELGELVSK</sequence>
<keyword id="KW-0963">Cytoplasm</keyword>
<keyword id="KW-0251">Elongation factor</keyword>
<keyword id="KW-0648">Protein biosynthesis</keyword>